<keyword id="KW-0204">Cytolysis</keyword>
<keyword id="KW-0578">Host cell lysis by virus</keyword>
<keyword id="KW-1033">Host cell outer membrane</keyword>
<keyword id="KW-1043">Host membrane</keyword>
<keyword id="KW-0449">Lipoprotein</keyword>
<keyword id="KW-0472">Membrane</keyword>
<keyword id="KW-1185">Reference proteome</keyword>
<keyword id="KW-0732">Signal</keyword>
<keyword id="KW-1188">Viral release from host cell</keyword>
<dbReference type="EMBL" id="V01146">
    <property type="protein sequence ID" value="CAA24439.1"/>
    <property type="molecule type" value="Genomic_DNA"/>
</dbReference>
<dbReference type="PIR" id="A04413">
    <property type="entry name" value="W8BPG7"/>
</dbReference>
<dbReference type="RefSeq" id="NP_042009.1">
    <property type="nucleotide sequence ID" value="NC_001604.1"/>
</dbReference>
<dbReference type="IntAct" id="P03788">
    <property type="interactions" value="1"/>
</dbReference>
<dbReference type="MINT" id="P03788"/>
<dbReference type="TCDB" id="1.M.1.2.3">
    <property type="family name" value="the rz/rz1 spanin1 (rz(1)) family"/>
</dbReference>
<dbReference type="KEGG" id="vg:1261057"/>
<dbReference type="OrthoDB" id="22542at10239"/>
<dbReference type="Proteomes" id="UP000000840">
    <property type="component" value="Genome"/>
</dbReference>
<dbReference type="GO" id="GO:0020002">
    <property type="term" value="C:host cell plasma membrane"/>
    <property type="evidence" value="ECO:0007669"/>
    <property type="project" value="UniProtKB-SubCell"/>
</dbReference>
<dbReference type="GO" id="GO:0016020">
    <property type="term" value="C:membrane"/>
    <property type="evidence" value="ECO:0007669"/>
    <property type="project" value="UniProtKB-KW"/>
</dbReference>
<dbReference type="GO" id="GO:0031640">
    <property type="term" value="P:killing of cells of another organism"/>
    <property type="evidence" value="ECO:0007669"/>
    <property type="project" value="UniProtKB-KW"/>
</dbReference>
<dbReference type="GO" id="GO:0019076">
    <property type="term" value="P:viral release from host cell"/>
    <property type="evidence" value="ECO:0007669"/>
    <property type="project" value="InterPro"/>
</dbReference>
<dbReference type="InterPro" id="IPR020130">
    <property type="entry name" value="O-spanin_T7likevirus"/>
</dbReference>
<dbReference type="Pfam" id="PF17531">
    <property type="entry name" value="O_Spanin_T7"/>
    <property type="match status" value="1"/>
</dbReference>
<protein>
    <recommendedName>
        <fullName evidence="2">Spanin, outer lipoprotein subunit</fullName>
        <shortName>o-spanin</shortName>
    </recommendedName>
    <alternativeName>
        <fullName>Gene product 18.7</fullName>
        <shortName>Gp18.7</shortName>
    </alternativeName>
    <alternativeName>
        <fullName>Protein 18.7</fullName>
    </alternativeName>
</protein>
<organism>
    <name type="scientific">Escherichia phage T7</name>
    <name type="common">Bacteriophage T7</name>
    <dbReference type="NCBI Taxonomy" id="10760"/>
    <lineage>
        <taxon>Viruses</taxon>
        <taxon>Duplodnaviria</taxon>
        <taxon>Heunggongvirae</taxon>
        <taxon>Uroviricota</taxon>
        <taxon>Caudoviricetes</taxon>
        <taxon>Autographiviridae</taxon>
        <taxon>Studiervirinae</taxon>
        <taxon>Teseptimavirus</taxon>
        <taxon>Teseptimavirus T7</taxon>
    </lineage>
</organism>
<name>SPAN2_BPT7</name>
<proteinExistence type="evidence at protein level"/>
<organismHost>
    <name type="scientific">Escherichia coli</name>
    <dbReference type="NCBI Taxonomy" id="562"/>
</organismHost>
<evidence type="ECO:0000255" key="1"/>
<evidence type="ECO:0000303" key="2">
    <source>
    </source>
</evidence>
<evidence type="ECO:0000305" key="3"/>
<evidence type="ECO:0000305" key="4">
    <source>
    </source>
</evidence>
<evidence type="ECO:0000305" key="5">
    <source>
    </source>
</evidence>
<reference key="1">
    <citation type="journal article" date="1983" name="J. Mol. Biol.">
        <title>Complete nucleotide sequence of bacteriophage T7 DNA and the locations of T7 genetic elements.</title>
        <authorList>
            <person name="Dunn J.J."/>
            <person name="Studier F.W."/>
        </authorList>
    </citation>
    <scope>NUCLEOTIDE SEQUENCE [LARGE SCALE GENOMIC DNA]</scope>
</reference>
<reference key="2">
    <citation type="journal article" date="1996" name="Nat. Genet.">
        <title>A protein linkage map of Escherichia coli bacteriophage T7.</title>
        <authorList>
            <person name="Bartel P.L."/>
            <person name="Roecklein J.A."/>
            <person name="SenGupta D."/>
            <person name="Fields S."/>
        </authorList>
    </citation>
    <scope>INTERACTION WITH I-SPANIN</scope>
</reference>
<reference key="3">
    <citation type="journal article" date="2007" name="J. Mol. Biol.">
        <title>Rz/Rz1 lysis gene equivalents in phages of Gram-negative hosts.</title>
        <authorList>
            <person name="Summer E.J."/>
            <person name="Berry J."/>
            <person name="Tran T.A."/>
            <person name="Niu L."/>
            <person name="Struck D.K."/>
            <person name="Young R."/>
        </authorList>
    </citation>
    <scope>IDENTIFICATION</scope>
    <scope>FUNCTION</scope>
</reference>
<gene>
    <name type="ordered locus">18.7</name>
</gene>
<sequence length="83" mass="9326">MSTLRELRLRRALKEQSMRYLLSIKKTLPRWKGALIGLFLICVATISGCASESKLPEPPMVSVDSSLMVEPNLTTEMLNVFSQ</sequence>
<accession>P03788</accession>
<feature type="signal peptide" evidence="1">
    <location>
        <begin position="1"/>
        <end position="50"/>
    </location>
</feature>
<feature type="chain" id="PRO_0000106539" description="Spanin, outer lipoprotein subunit">
    <location>
        <begin position="51"/>
        <end position="83"/>
    </location>
</feature>
<comment type="function">
    <text evidence="4">Component of the spanin complex that disrupts the host outer membrane and participates in cell lysis during virus exit. The spanin complex conducts the final step in host lysis by disrupting the outer membrane after holin and endolysin action have permeabilized the inner membrane and degraded the host peptidoglycans. Host outer membrane disruption is possibly due to local fusion between the inner and outer membrane performed by the spanin complex.</text>
</comment>
<comment type="subunit">
    <text evidence="5">Homodimer. Interacts (via C-terminus) with the spanin inner membrane subunit (via C-terminus). Part of the spanin complex which spans the entire periplasmic space. The spanin complex is composed of spanin inner membrane subunit and spanin outer membrane subunit.</text>
</comment>
<comment type="subcellular location">
    <subcellularLocation>
        <location evidence="4">Host cell outer membrane</location>
        <topology evidence="4">Lipid-anchor</topology>
        <orientation evidence="4">Periplasmic side</orientation>
    </subcellularLocation>
</comment>
<comment type="similarity">
    <text evidence="3">Belongs to the T7likevirus o-spanin family.</text>
</comment>